<name>IMMC_TABYA</name>
<reference evidence="5" key="1">
    <citation type="journal article" date="2008" name="Mol. Cell. Proteomics">
        <title>Toward an understanding of the molecular mechanism for successful blood feeding by coupling proteomics analysis with pharmacological testing of horsefly salivary glands.</title>
        <authorList>
            <person name="Xu X."/>
            <person name="Yang H."/>
            <person name="Ma D."/>
            <person name="Wu J."/>
            <person name="Wang Y."/>
            <person name="Song Y."/>
            <person name="Wang X."/>
            <person name="Lu Y."/>
            <person name="Yang J."/>
            <person name="Lai R."/>
        </authorList>
    </citation>
    <scope>NUCLEOTIDE SEQUENCE [MRNA]</scope>
    <scope>PROTEIN SEQUENCE OF 39-68</scope>
    <scope>SUBCELLULAR LOCATION</scope>
    <source>
        <tissue>Salivary gland</tissue>
    </source>
</reference>
<keyword id="KW-0165">Cleavage on pair of basic residues</keyword>
<keyword id="KW-0903">Direct protein sequencing</keyword>
<keyword id="KW-0964">Secreted</keyword>
<keyword id="KW-0732">Signal</keyword>
<proteinExistence type="evidence at protein level"/>
<sequence length="68" mass="7351">MLFKSYVYFLAGLLLVGLFTSCDADAQYEELVPGFFRKGGVSGVGDYKPIVVFGKSFNQFEAAEGAKG</sequence>
<protein>
    <recommendedName>
        <fullName evidence="3">Tabimmunregulin 12</fullName>
    </recommendedName>
</protein>
<evidence type="ECO:0000255" key="1"/>
<evidence type="ECO:0000269" key="2">
    <source>
    </source>
</evidence>
<evidence type="ECO:0000303" key="3">
    <source>
    </source>
</evidence>
<evidence type="ECO:0000305" key="4">
    <source>
    </source>
</evidence>
<evidence type="ECO:0000312" key="5">
    <source>
        <dbReference type="EMBL" id="ABX80092.1"/>
    </source>
</evidence>
<accession>C1IC04</accession>
<feature type="signal peptide" evidence="1">
    <location>
        <begin position="1"/>
        <end position="24"/>
    </location>
</feature>
<feature type="propeptide" id="PRO_0000456098" evidence="4">
    <location>
        <begin position="25"/>
        <end position="38"/>
    </location>
</feature>
<feature type="peptide" id="PRO_5002908927" description="Tabimmunregulin 12" evidence="2">
    <location>
        <begin position="39"/>
        <end position="68"/>
    </location>
</feature>
<organism>
    <name type="scientific">Tabanus yao</name>
    <name type="common">Horsefly</name>
    <dbReference type="NCBI Taxonomy" id="485572"/>
    <lineage>
        <taxon>Eukaryota</taxon>
        <taxon>Metazoa</taxon>
        <taxon>Ecdysozoa</taxon>
        <taxon>Arthropoda</taxon>
        <taxon>Hexapoda</taxon>
        <taxon>Insecta</taxon>
        <taxon>Pterygota</taxon>
        <taxon>Neoptera</taxon>
        <taxon>Endopterygota</taxon>
        <taxon>Diptera</taxon>
        <taxon>Brachycera</taxon>
        <taxon>Tabanomorpha</taxon>
        <taxon>Tabanoidea</taxon>
        <taxon>Tabanidae</taxon>
        <taxon>Tabanus</taxon>
    </lineage>
</organism>
<comment type="function">
    <text evidence="2">Horsefly salivary gland immunosuppressant protein that likely inhibits the host inflammatory response by regulation of anti- and pro-inflammatory cytokines (PubMed:18087067). When tested on mouse splenocytes in the presence of LPS, it increases the secretion of the proinflammatory cytokine interleukin-10 (IL10) and decreases the secretion of the proinflammatory cytokine interferon-gamma (IFNG) in a dose-dependent manner (PubMed:18087067).</text>
</comment>
<comment type="subcellular location">
    <subcellularLocation>
        <location evidence="2">Secreted</location>
    </subcellularLocation>
</comment>
<comment type="tissue specificity">
    <text evidence="4">Expressed in salivary glands.</text>
</comment>
<dbReference type="EMBL" id="EU147275">
    <property type="protein sequence ID" value="ABX80092.1"/>
    <property type="molecule type" value="mRNA"/>
</dbReference>
<dbReference type="GO" id="GO:0005576">
    <property type="term" value="C:extracellular region"/>
    <property type="evidence" value="ECO:0007669"/>
    <property type="project" value="UniProtKB-SubCell"/>
</dbReference>